<gene>
    <name type="primary">tmk</name>
    <name type="ordered locus">Cj0766c</name>
</gene>
<reference key="1">
    <citation type="journal article" date="2000" name="Nature">
        <title>The genome sequence of the food-borne pathogen Campylobacter jejuni reveals hypervariable sequences.</title>
        <authorList>
            <person name="Parkhill J."/>
            <person name="Wren B.W."/>
            <person name="Mungall K.L."/>
            <person name="Ketley J.M."/>
            <person name="Churcher C.M."/>
            <person name="Basham D."/>
            <person name="Chillingworth T."/>
            <person name="Davies R.M."/>
            <person name="Feltwell T."/>
            <person name="Holroyd S."/>
            <person name="Jagels K."/>
            <person name="Karlyshev A.V."/>
            <person name="Moule S."/>
            <person name="Pallen M.J."/>
            <person name="Penn C.W."/>
            <person name="Quail M.A."/>
            <person name="Rajandream M.A."/>
            <person name="Rutherford K.M."/>
            <person name="van Vliet A.H.M."/>
            <person name="Whitehead S."/>
            <person name="Barrell B.G."/>
        </authorList>
    </citation>
    <scope>NUCLEOTIDE SEQUENCE [LARGE SCALE GENOMIC DNA]</scope>
    <source>
        <strain>ATCC 700819 / NCTC 11168</strain>
    </source>
</reference>
<comment type="function">
    <text evidence="1">Phosphorylation of dTMP to form dTDP in both de novo and salvage pathways of dTTP synthesis.</text>
</comment>
<comment type="catalytic activity">
    <reaction>
        <text>dTMP + ATP = dTDP + ADP</text>
        <dbReference type="Rhea" id="RHEA:13517"/>
        <dbReference type="ChEBI" id="CHEBI:30616"/>
        <dbReference type="ChEBI" id="CHEBI:58369"/>
        <dbReference type="ChEBI" id="CHEBI:63528"/>
        <dbReference type="ChEBI" id="CHEBI:456216"/>
        <dbReference type="EC" id="2.7.4.9"/>
    </reaction>
</comment>
<comment type="similarity">
    <text evidence="3">Belongs to the thymidylate kinase family.</text>
</comment>
<name>KTHY_CAMJE</name>
<proteinExistence type="inferred from homology"/>
<accession>Q9PPF3</accession>
<accession>Q0PAC4</accession>
<evidence type="ECO:0000250" key="1"/>
<evidence type="ECO:0000255" key="2"/>
<evidence type="ECO:0000305" key="3"/>
<sequence length="192" mass="22275">MYVVFEGIDCVGKSTQISLLKEIYKDAIFTLEPGGTELGKHLREILLNKTHPINKRAELLLFLADRAQHFEEILKTNQNKLIISDRSFISGMAYAKDFENDLLFALNSFALENFFPQKIIFLKGDANLIQERLSQKELDSIEKRGIEYFLSVQDKLEKVLHFLKEKISVEILTLDAKESKEKLHQQIKEFLQ</sequence>
<keyword id="KW-0067">ATP-binding</keyword>
<keyword id="KW-0418">Kinase</keyword>
<keyword id="KW-0545">Nucleotide biosynthesis</keyword>
<keyword id="KW-0547">Nucleotide-binding</keyword>
<keyword id="KW-1185">Reference proteome</keyword>
<keyword id="KW-0808">Transferase</keyword>
<organism>
    <name type="scientific">Campylobacter jejuni subsp. jejuni serotype O:2 (strain ATCC 700819 / NCTC 11168)</name>
    <dbReference type="NCBI Taxonomy" id="192222"/>
    <lineage>
        <taxon>Bacteria</taxon>
        <taxon>Pseudomonadati</taxon>
        <taxon>Campylobacterota</taxon>
        <taxon>Epsilonproteobacteria</taxon>
        <taxon>Campylobacterales</taxon>
        <taxon>Campylobacteraceae</taxon>
        <taxon>Campylobacter</taxon>
    </lineage>
</organism>
<protein>
    <recommendedName>
        <fullName>Thymidylate kinase</fullName>
        <ecNumber>2.7.4.9</ecNumber>
    </recommendedName>
    <alternativeName>
        <fullName>dTMP kinase</fullName>
    </alternativeName>
</protein>
<dbReference type="EC" id="2.7.4.9"/>
<dbReference type="EMBL" id="AL111168">
    <property type="protein sequence ID" value="CAL34894.1"/>
    <property type="molecule type" value="Genomic_DNA"/>
</dbReference>
<dbReference type="PIR" id="F81347">
    <property type="entry name" value="F81347"/>
</dbReference>
<dbReference type="RefSeq" id="WP_002852526.1">
    <property type="nucleotide sequence ID" value="NZ_SZUC01000001.1"/>
</dbReference>
<dbReference type="RefSeq" id="YP_002344173.1">
    <property type="nucleotide sequence ID" value="NC_002163.1"/>
</dbReference>
<dbReference type="SMR" id="Q9PPF3"/>
<dbReference type="IntAct" id="Q9PPF3">
    <property type="interactions" value="23"/>
</dbReference>
<dbReference type="STRING" id="192222.Cj0766c"/>
<dbReference type="PaxDb" id="192222-Cj0766c"/>
<dbReference type="EnsemblBacteria" id="CAL34894">
    <property type="protein sequence ID" value="CAL34894"/>
    <property type="gene ID" value="Cj0766c"/>
</dbReference>
<dbReference type="GeneID" id="905076"/>
<dbReference type="KEGG" id="cje:Cj0766c"/>
<dbReference type="PATRIC" id="fig|192222.6.peg.754"/>
<dbReference type="eggNOG" id="COG0125">
    <property type="taxonomic scope" value="Bacteria"/>
</dbReference>
<dbReference type="HOGENOM" id="CLU_049131_0_0_7"/>
<dbReference type="OrthoDB" id="9774907at2"/>
<dbReference type="Proteomes" id="UP000000799">
    <property type="component" value="Chromosome"/>
</dbReference>
<dbReference type="GO" id="GO:0005829">
    <property type="term" value="C:cytosol"/>
    <property type="evidence" value="ECO:0007669"/>
    <property type="project" value="TreeGrafter"/>
</dbReference>
<dbReference type="GO" id="GO:0005524">
    <property type="term" value="F:ATP binding"/>
    <property type="evidence" value="ECO:0007669"/>
    <property type="project" value="UniProtKB-UniRule"/>
</dbReference>
<dbReference type="GO" id="GO:0004798">
    <property type="term" value="F:dTMP kinase activity"/>
    <property type="evidence" value="ECO:0007669"/>
    <property type="project" value="UniProtKB-UniRule"/>
</dbReference>
<dbReference type="GO" id="GO:0006233">
    <property type="term" value="P:dTDP biosynthetic process"/>
    <property type="evidence" value="ECO:0007669"/>
    <property type="project" value="InterPro"/>
</dbReference>
<dbReference type="GO" id="GO:0006235">
    <property type="term" value="P:dTTP biosynthetic process"/>
    <property type="evidence" value="ECO:0007669"/>
    <property type="project" value="UniProtKB-UniRule"/>
</dbReference>
<dbReference type="GO" id="GO:0006227">
    <property type="term" value="P:dUDP biosynthetic process"/>
    <property type="evidence" value="ECO:0007669"/>
    <property type="project" value="TreeGrafter"/>
</dbReference>
<dbReference type="CDD" id="cd01672">
    <property type="entry name" value="TMPK"/>
    <property type="match status" value="1"/>
</dbReference>
<dbReference type="Gene3D" id="3.40.50.300">
    <property type="entry name" value="P-loop containing nucleotide triphosphate hydrolases"/>
    <property type="match status" value="1"/>
</dbReference>
<dbReference type="HAMAP" id="MF_00165">
    <property type="entry name" value="Thymidylate_kinase"/>
    <property type="match status" value="1"/>
</dbReference>
<dbReference type="InterPro" id="IPR027417">
    <property type="entry name" value="P-loop_NTPase"/>
</dbReference>
<dbReference type="InterPro" id="IPR039430">
    <property type="entry name" value="Thymidylate_kin-like_dom"/>
</dbReference>
<dbReference type="InterPro" id="IPR018094">
    <property type="entry name" value="Thymidylate_kinase"/>
</dbReference>
<dbReference type="NCBIfam" id="TIGR00041">
    <property type="entry name" value="DTMP_kinase"/>
    <property type="match status" value="1"/>
</dbReference>
<dbReference type="PANTHER" id="PTHR10344">
    <property type="entry name" value="THYMIDYLATE KINASE"/>
    <property type="match status" value="1"/>
</dbReference>
<dbReference type="PANTHER" id="PTHR10344:SF4">
    <property type="entry name" value="UMP-CMP KINASE 2, MITOCHONDRIAL"/>
    <property type="match status" value="1"/>
</dbReference>
<dbReference type="Pfam" id="PF02223">
    <property type="entry name" value="Thymidylate_kin"/>
    <property type="match status" value="1"/>
</dbReference>
<dbReference type="SUPFAM" id="SSF52540">
    <property type="entry name" value="P-loop containing nucleoside triphosphate hydrolases"/>
    <property type="match status" value="1"/>
</dbReference>
<dbReference type="PROSITE" id="PS01331">
    <property type="entry name" value="THYMIDYLATE_KINASE"/>
    <property type="match status" value="1"/>
</dbReference>
<feature type="chain" id="PRO_0000155254" description="Thymidylate kinase">
    <location>
        <begin position="1"/>
        <end position="192"/>
    </location>
</feature>
<feature type="binding site" evidence="2">
    <location>
        <begin position="7"/>
        <end position="14"/>
    </location>
    <ligand>
        <name>ATP</name>
        <dbReference type="ChEBI" id="CHEBI:30616"/>
    </ligand>
</feature>